<name>RUTA_KLEVT</name>
<evidence type="ECO:0000255" key="1">
    <source>
        <dbReference type="HAMAP-Rule" id="MF_01699"/>
    </source>
</evidence>
<accession>D3RKL0</accession>
<dbReference type="EC" id="1.14.99.46" evidence="1"/>
<dbReference type="EMBL" id="CP001891">
    <property type="protein sequence ID" value="ADC59221.1"/>
    <property type="molecule type" value="Genomic_DNA"/>
</dbReference>
<dbReference type="RefSeq" id="WP_004204507.1">
    <property type="nucleotide sequence ID" value="NC_013850.1"/>
</dbReference>
<dbReference type="SMR" id="D3RKL0"/>
<dbReference type="GeneID" id="93274032"/>
<dbReference type="KEGG" id="kva:Kvar_3341"/>
<dbReference type="HOGENOM" id="CLU_027853_1_1_6"/>
<dbReference type="GO" id="GO:0008726">
    <property type="term" value="F:alkanesulfonate monooxygenase activity"/>
    <property type="evidence" value="ECO:0007669"/>
    <property type="project" value="TreeGrafter"/>
</dbReference>
<dbReference type="GO" id="GO:0052614">
    <property type="term" value="F:uracil oxygenase activity"/>
    <property type="evidence" value="ECO:0007669"/>
    <property type="project" value="UniProtKB-EC"/>
</dbReference>
<dbReference type="GO" id="GO:0046306">
    <property type="term" value="P:alkanesulfonate catabolic process"/>
    <property type="evidence" value="ECO:0007669"/>
    <property type="project" value="TreeGrafter"/>
</dbReference>
<dbReference type="GO" id="GO:0019740">
    <property type="term" value="P:nitrogen utilization"/>
    <property type="evidence" value="ECO:0007669"/>
    <property type="project" value="UniProtKB-UniRule"/>
</dbReference>
<dbReference type="GO" id="GO:0006212">
    <property type="term" value="P:uracil catabolic process"/>
    <property type="evidence" value="ECO:0007669"/>
    <property type="project" value="UniProtKB-UniRule"/>
</dbReference>
<dbReference type="CDD" id="cd01094">
    <property type="entry name" value="Alkanesulfonate_monoxygenase"/>
    <property type="match status" value="1"/>
</dbReference>
<dbReference type="FunFam" id="3.20.20.30:FF:000003">
    <property type="entry name" value="Pyrimidine monooxygenase RutA"/>
    <property type="match status" value="1"/>
</dbReference>
<dbReference type="Gene3D" id="3.20.20.30">
    <property type="entry name" value="Luciferase-like domain"/>
    <property type="match status" value="1"/>
</dbReference>
<dbReference type="HAMAP" id="MF_01699">
    <property type="entry name" value="RutA"/>
    <property type="match status" value="1"/>
</dbReference>
<dbReference type="InterPro" id="IPR011251">
    <property type="entry name" value="Luciferase-like_dom"/>
</dbReference>
<dbReference type="InterPro" id="IPR036661">
    <property type="entry name" value="Luciferase-like_sf"/>
</dbReference>
<dbReference type="InterPro" id="IPR019914">
    <property type="entry name" value="Pyrimidine_monooxygenase_RutA"/>
</dbReference>
<dbReference type="InterPro" id="IPR050172">
    <property type="entry name" value="SsuD_RutA_monooxygenase"/>
</dbReference>
<dbReference type="NCBIfam" id="TIGR03612">
    <property type="entry name" value="RutA"/>
    <property type="match status" value="1"/>
</dbReference>
<dbReference type="PANTHER" id="PTHR42847">
    <property type="entry name" value="ALKANESULFONATE MONOOXYGENASE"/>
    <property type="match status" value="1"/>
</dbReference>
<dbReference type="PANTHER" id="PTHR42847:SF4">
    <property type="entry name" value="ALKANESULFONATE MONOOXYGENASE-RELATED"/>
    <property type="match status" value="1"/>
</dbReference>
<dbReference type="Pfam" id="PF00296">
    <property type="entry name" value="Bac_luciferase"/>
    <property type="match status" value="1"/>
</dbReference>
<dbReference type="SUPFAM" id="SSF51679">
    <property type="entry name" value="Bacterial luciferase-like"/>
    <property type="match status" value="1"/>
</dbReference>
<keyword id="KW-0285">Flavoprotein</keyword>
<keyword id="KW-0288">FMN</keyword>
<keyword id="KW-0503">Monooxygenase</keyword>
<keyword id="KW-0521">NADP</keyword>
<keyword id="KW-0560">Oxidoreductase</keyword>
<organism>
    <name type="scientific">Klebsiella variicola (strain At-22)</name>
    <dbReference type="NCBI Taxonomy" id="640131"/>
    <lineage>
        <taxon>Bacteria</taxon>
        <taxon>Pseudomonadati</taxon>
        <taxon>Pseudomonadota</taxon>
        <taxon>Gammaproteobacteria</taxon>
        <taxon>Enterobacterales</taxon>
        <taxon>Enterobacteriaceae</taxon>
        <taxon>Klebsiella/Raoultella group</taxon>
        <taxon>Klebsiella</taxon>
        <taxon>Klebsiella pneumoniae complex</taxon>
    </lineage>
</organism>
<gene>
    <name evidence="1" type="primary">rutA</name>
    <name type="ordered locus">Kvar_3341</name>
</gene>
<proteinExistence type="inferred from homology"/>
<comment type="function">
    <text evidence="1">Catalyzes the pyrimidine ring opening between N-3 and C-4 by an unusual flavin hydroperoxide-catalyzed mechanism, adding oxygen atoms in the process to yield ureidoacrylate peracid, that immediately reacts with FMN forming ureidoacrylate and FMN-N(5)-oxide. The FMN-N(5)-oxide reacts spontaneously with NADH to produce FMN. Requires the flavin reductase RutF to regenerate FMN in vivo.</text>
</comment>
<comment type="catalytic activity">
    <reaction evidence="1">
        <text>uracil + FMNH2 + NADH + O2 = (Z)-3-ureidoacrylate + FMN + NAD(+) + H2O + H(+)</text>
        <dbReference type="Rhea" id="RHEA:31587"/>
        <dbReference type="ChEBI" id="CHEBI:15377"/>
        <dbReference type="ChEBI" id="CHEBI:15378"/>
        <dbReference type="ChEBI" id="CHEBI:15379"/>
        <dbReference type="ChEBI" id="CHEBI:17568"/>
        <dbReference type="ChEBI" id="CHEBI:57540"/>
        <dbReference type="ChEBI" id="CHEBI:57618"/>
        <dbReference type="ChEBI" id="CHEBI:57945"/>
        <dbReference type="ChEBI" id="CHEBI:58210"/>
        <dbReference type="ChEBI" id="CHEBI:59891"/>
        <dbReference type="EC" id="1.14.99.46"/>
    </reaction>
</comment>
<comment type="catalytic activity">
    <reaction evidence="1">
        <text>thymine + FMNH2 + NADH + O2 = (Z)-2-methylureidoacrylate + FMN + NAD(+) + H2O + H(+)</text>
        <dbReference type="Rhea" id="RHEA:31599"/>
        <dbReference type="ChEBI" id="CHEBI:15377"/>
        <dbReference type="ChEBI" id="CHEBI:15378"/>
        <dbReference type="ChEBI" id="CHEBI:15379"/>
        <dbReference type="ChEBI" id="CHEBI:17821"/>
        <dbReference type="ChEBI" id="CHEBI:57540"/>
        <dbReference type="ChEBI" id="CHEBI:57618"/>
        <dbReference type="ChEBI" id="CHEBI:57945"/>
        <dbReference type="ChEBI" id="CHEBI:58210"/>
        <dbReference type="ChEBI" id="CHEBI:143783"/>
        <dbReference type="EC" id="1.14.99.46"/>
    </reaction>
</comment>
<comment type="similarity">
    <text evidence="1">Belongs to the NtaA/SnaA/DszA monooxygenase family. RutA subfamily.</text>
</comment>
<sequence length="363" mass="39942">MKIGVFVPIGNNGWLISTHAPQYMPTFELNKAIVQKAEHYHFDFALSMIKLRGFGGKTEFWDHNLESFTLMAGLAAVTSKIQIYATAATLTLPPAIVARMASTIDSISGGRFGVNLVTGWQKPEYDQMGMWPGDDYFASRYDYLTEYVQVLRDLWGTGRSDFKGDYFTMNDCRVSPRPSQPMKVICAGQSDAGMAFSAQHADYNFCFGKGVNTPTAFAPTAARMMQAAEKTGRDVGSYVLFMVIADETDEAARAKWEHYKAGADEEALAWLTEQSQKDTRSGSDTNVRQMADPTSAVNINMGTLVGSYASVARMLDEVASVPGTDGVLLTFDDFLAGIDAFGERIQPLMRCRDHIAPVTREVA</sequence>
<protein>
    <recommendedName>
        <fullName evidence="1">Pyrimidine monooxygenase RutA</fullName>
        <ecNumber evidence="1">1.14.99.46</ecNumber>
    </recommendedName>
</protein>
<reference key="1">
    <citation type="submission" date="2010-02" db="EMBL/GenBank/DDBJ databases">
        <title>Complete sequence of Klebsiella variicola At-22.</title>
        <authorList>
            <consortium name="US DOE Joint Genome Institute"/>
            <person name="Lucas S."/>
            <person name="Copeland A."/>
            <person name="Lapidus A."/>
            <person name="Cheng J.-F."/>
            <person name="Bruce D."/>
            <person name="Goodwin L."/>
            <person name="Pitluck S."/>
            <person name="Davenport K."/>
            <person name="Brettin T."/>
            <person name="Detter J.C."/>
            <person name="Han C."/>
            <person name="Tapia R."/>
            <person name="Larimer F."/>
            <person name="Land M."/>
            <person name="Hauser L."/>
            <person name="Kyrpides N."/>
            <person name="Ivanova N."/>
            <person name="Pinto A."/>
            <person name="Currie C."/>
            <person name="Woyke T."/>
        </authorList>
    </citation>
    <scope>NUCLEOTIDE SEQUENCE [LARGE SCALE GENOMIC DNA]</scope>
    <source>
        <strain>At-22</strain>
    </source>
</reference>
<feature type="chain" id="PRO_0000402627" description="Pyrimidine monooxygenase RutA">
    <location>
        <begin position="1"/>
        <end position="363"/>
    </location>
</feature>
<feature type="binding site" evidence="1">
    <location>
        <begin position="49"/>
        <end position="50"/>
    </location>
    <ligand>
        <name>FMN</name>
        <dbReference type="ChEBI" id="CHEBI:58210"/>
    </ligand>
</feature>
<feature type="binding site" evidence="1">
    <location>
        <position position="115"/>
    </location>
    <ligand>
        <name>FMN</name>
        <dbReference type="ChEBI" id="CHEBI:58210"/>
    </ligand>
</feature>
<feature type="binding site" evidence="1">
    <location>
        <position position="124"/>
    </location>
    <ligand>
        <name>FMN</name>
        <dbReference type="ChEBI" id="CHEBI:58210"/>
    </ligand>
</feature>
<feature type="binding site" evidence="1">
    <location>
        <begin position="140"/>
        <end position="141"/>
    </location>
    <ligand>
        <name>FMN</name>
        <dbReference type="ChEBI" id="CHEBI:58210"/>
    </ligand>
</feature>
<feature type="binding site" evidence="1">
    <location>
        <position position="190"/>
    </location>
    <ligand>
        <name>FMN</name>
        <dbReference type="ChEBI" id="CHEBI:58210"/>
    </ligand>
</feature>